<keyword id="KW-0284">Flavonoid biosynthesis</keyword>
<keyword id="KW-0521">NADP</keyword>
<keyword id="KW-0560">Oxidoreductase</keyword>
<sequence>MGSESESVCVTGASGFIGSWLVMRLLEHGYTVRATVRDPTNQKKVKHLLDLPKAETHLTLWKADLADEGSFDEAIQGCSGVFHVATPMDFESRDPENEVIKPTINGLLDILKACQKAKTVRKLVFTSSAGTVNVEEHQKPVYDESNWSDVEFCRSVKMTGWMYFVSKTLAEQAAWKYAKENNIDFITIIPTLVIGPFLMPSMPPSLITGLSPILRNESHYGIIKQGQYVHLDDLCLSHIYLYKHPKAEGRYICSSHDATIHELVKMLREKYPEYNIPTKFKGIDDNLEPVHFSSKKLREIGFEFKYSLEDMFVGAVDACRAKGLIPIPAEKTEAAEESNLVDVKVGS</sequence>
<comment type="function">
    <text evidence="2">Bifunctional enzyme involved in the flavonoid metabolism. May use dihydroquercetin, eriodictyol, garbanzol (5-deoxydihydrokaempferol), dihydrofisetin (5-deoxydihydroquercetin), dihydrokaempferol to a low extent (5%), but not naringenin, 5-deoxynaringenin or butin (5-deoxyeriodictyol) as substrate.</text>
</comment>
<comment type="catalytic activity">
    <reaction evidence="2">
        <text>a (2R,3S,4S)-leucoanthocyanidin + NADP(+) = a (2R,3R)-dihydroflavonol + NADPH + H(+)</text>
        <dbReference type="Rhea" id="RHEA:54444"/>
        <dbReference type="ChEBI" id="CHEBI:15378"/>
        <dbReference type="ChEBI" id="CHEBI:57783"/>
        <dbReference type="ChEBI" id="CHEBI:58349"/>
        <dbReference type="ChEBI" id="CHEBI:138176"/>
        <dbReference type="ChEBI" id="CHEBI:138188"/>
        <dbReference type="EC" id="1.1.1.219"/>
    </reaction>
</comment>
<comment type="catalytic activity">
    <reaction evidence="2">
        <text>(2S)-flavan-4-ol + NADP(+) = (2S)-flavanone + NADPH + H(+)</text>
        <dbReference type="Rhea" id="RHEA:11228"/>
        <dbReference type="ChEBI" id="CHEBI:15378"/>
        <dbReference type="ChEBI" id="CHEBI:15605"/>
        <dbReference type="ChEBI" id="CHEBI:15606"/>
        <dbReference type="ChEBI" id="CHEBI:57783"/>
        <dbReference type="ChEBI" id="CHEBI:58349"/>
        <dbReference type="EC" id="1.1.1.234"/>
    </reaction>
</comment>
<comment type="biophysicochemical properties">
    <kinetics>
        <KM evidence="2">3.8 uM for eriodictyol</KM>
        <KM evidence="2">3 uM for dihydroquercetin</KM>
        <Vmax evidence="2">1.6 nmol/sec/g enzyme toward eriodictyol</Vmax>
        <Vmax evidence="2">4.7 nmol/sec/g enzyme toward dihydroquercetin</Vmax>
    </kinetics>
    <phDependence>
        <text evidence="2">Optimum pH is 5.75 with dihydroquercetin as substrate.</text>
    </phDependence>
</comment>
<comment type="similarity">
    <text evidence="3">Belongs to the NAD(P)-dependent epimerase/dehydratase family. Dihydroflavonol-4-reductase subfamily.</text>
</comment>
<reference key="1">
    <citation type="journal article" date="2003" name="Arch. Biochem. Biophys.">
        <title>Molecular cloning, substrate specificity of the functionally expressed dihydroflavonol 4-reductases from Malus domestica and Pyrus communis cultivars and the consequences for flavonoid metabolism.</title>
        <authorList>
            <person name="Fischer T.C."/>
            <person name="Halbwirth H."/>
            <person name="Meisel B."/>
            <person name="Stich K."/>
            <person name="Forkmann G."/>
        </authorList>
    </citation>
    <scope>NUCLEOTIDE SEQUENCE [MRNA]</scope>
    <scope>FUNCTION</scope>
    <scope>CATALYTIC ACTIVITY</scope>
    <scope>BIOPHYSICOCHEMICAL PROPERTIES</scope>
    <source>
        <strain>cv. Abbe Fetel</strain>
        <strain>cv. Conference</strain>
        <strain>cv. Pyrodwarf</strain>
    </source>
</reference>
<accession>Q84KP0</accession>
<accession>Q84K59</accession>
<gene>
    <name type="primary">DFR</name>
</gene>
<proteinExistence type="evidence at protein level"/>
<name>DFRA_PYRCO</name>
<organism>
    <name type="scientific">Pyrus communis</name>
    <name type="common">Pear</name>
    <name type="synonym">Pyrus domestica</name>
    <dbReference type="NCBI Taxonomy" id="23211"/>
    <lineage>
        <taxon>Eukaryota</taxon>
        <taxon>Viridiplantae</taxon>
        <taxon>Streptophyta</taxon>
        <taxon>Embryophyta</taxon>
        <taxon>Tracheophyta</taxon>
        <taxon>Spermatophyta</taxon>
        <taxon>Magnoliopsida</taxon>
        <taxon>eudicotyledons</taxon>
        <taxon>Gunneridae</taxon>
        <taxon>Pentapetalae</taxon>
        <taxon>rosids</taxon>
        <taxon>fabids</taxon>
        <taxon>Rosales</taxon>
        <taxon>Rosaceae</taxon>
        <taxon>Amygdaloideae</taxon>
        <taxon>Maleae</taxon>
        <taxon>Pyrus</taxon>
    </lineage>
</organism>
<evidence type="ECO:0000250" key="1">
    <source>
        <dbReference type="UniProtKB" id="A0A059TC02"/>
    </source>
</evidence>
<evidence type="ECO:0000269" key="2">
    <source>
    </source>
</evidence>
<evidence type="ECO:0000305" key="3"/>
<protein>
    <recommendedName>
        <fullName>Bifunctional dihydroflavonol 4-reductase/flavanone 4-reductase</fullName>
    </recommendedName>
    <alternativeName>
        <fullName>Dihydroflavonol 4-reductase</fullName>
        <shortName>DFR</shortName>
        <ecNumber evidence="2">1.1.1.219</ecNumber>
    </alternativeName>
    <alternativeName>
        <fullName>Flavanone 4-reductase</fullName>
        <shortName>FNR</shortName>
        <ecNumber evidence="2">1.1.1.234</ecNumber>
    </alternativeName>
</protein>
<feature type="chain" id="PRO_0000367057" description="Bifunctional dihydroflavonol 4-reductase/flavanone 4-reductase">
    <location>
        <begin position="1"/>
        <end position="347"/>
    </location>
</feature>
<feature type="binding site" evidence="1">
    <location>
        <position position="44"/>
    </location>
    <ligand>
        <name>NADP(+)</name>
        <dbReference type="ChEBI" id="CHEBI:58349"/>
    </ligand>
</feature>
<feature type="binding site" evidence="1">
    <location>
        <position position="163"/>
    </location>
    <ligand>
        <name>NADP(+)</name>
        <dbReference type="ChEBI" id="CHEBI:58349"/>
    </ligand>
</feature>
<feature type="sequence variant" description="In strain: cv. Conference and cv. Pyrodwarf.">
    <original>R</original>
    <variation>K</variation>
    <location>
        <position position="93"/>
    </location>
</feature>
<feature type="sequence variant" description="In strain: cv. Conference and cv. Pyrodwarf.">
    <original>S</original>
    <variation>G</variation>
    <location>
        <position position="347"/>
    </location>
</feature>
<dbReference type="EC" id="1.1.1.219" evidence="2"/>
<dbReference type="EC" id="1.1.1.234" evidence="2"/>
<dbReference type="EMBL" id="AY227730">
    <property type="protein sequence ID" value="AAO39818.1"/>
    <property type="molecule type" value="mRNA"/>
</dbReference>
<dbReference type="EMBL" id="AY227731">
    <property type="protein sequence ID" value="AAO39819.1"/>
    <property type="molecule type" value="mRNA"/>
</dbReference>
<dbReference type="EMBL" id="AY227732">
    <property type="protein sequence ID" value="AAO39820.1"/>
    <property type="molecule type" value="mRNA"/>
</dbReference>
<dbReference type="SMR" id="Q84KP0"/>
<dbReference type="GO" id="GO:0045552">
    <property type="term" value="F:dihydrokaempferol 4-reductase activity"/>
    <property type="evidence" value="ECO:0007669"/>
    <property type="project" value="UniProtKB-EC"/>
</dbReference>
<dbReference type="GO" id="GO:0047890">
    <property type="term" value="F:flavanone 4-reductase activity"/>
    <property type="evidence" value="ECO:0007669"/>
    <property type="project" value="UniProtKB-EC"/>
</dbReference>
<dbReference type="GO" id="GO:0009718">
    <property type="term" value="P:anthocyanin-containing compound biosynthetic process"/>
    <property type="evidence" value="ECO:0007669"/>
    <property type="project" value="TreeGrafter"/>
</dbReference>
<dbReference type="CDD" id="cd08958">
    <property type="entry name" value="FR_SDR_e"/>
    <property type="match status" value="1"/>
</dbReference>
<dbReference type="FunFam" id="3.40.50.720:FF:000085">
    <property type="entry name" value="Dihydroflavonol reductase"/>
    <property type="match status" value="1"/>
</dbReference>
<dbReference type="Gene3D" id="3.40.50.720">
    <property type="entry name" value="NAD(P)-binding Rossmann-like Domain"/>
    <property type="match status" value="1"/>
</dbReference>
<dbReference type="InterPro" id="IPR001509">
    <property type="entry name" value="Epimerase_deHydtase"/>
</dbReference>
<dbReference type="InterPro" id="IPR036291">
    <property type="entry name" value="NAD(P)-bd_dom_sf"/>
</dbReference>
<dbReference type="InterPro" id="IPR050425">
    <property type="entry name" value="NAD(P)_dehydrat-like"/>
</dbReference>
<dbReference type="PANTHER" id="PTHR10366">
    <property type="entry name" value="NAD DEPENDENT EPIMERASE/DEHYDRATASE"/>
    <property type="match status" value="1"/>
</dbReference>
<dbReference type="PANTHER" id="PTHR10366:SF564">
    <property type="entry name" value="STEROL-4-ALPHA-CARBOXYLATE 3-DEHYDROGENASE, DECARBOXYLATING"/>
    <property type="match status" value="1"/>
</dbReference>
<dbReference type="Pfam" id="PF01370">
    <property type="entry name" value="Epimerase"/>
    <property type="match status" value="1"/>
</dbReference>
<dbReference type="SUPFAM" id="SSF51735">
    <property type="entry name" value="NAD(P)-binding Rossmann-fold domains"/>
    <property type="match status" value="1"/>
</dbReference>